<comment type="function">
    <text evidence="1">Required for the insertion and/or proper folding and/or complex formation of integral membrane proteins into the membrane. Involved in integration of membrane proteins that insert both dependently and independently of the Sec translocase complex, as well as at least some lipoproteins. Aids folding of multispanning membrane proteins.</text>
</comment>
<comment type="subunit">
    <text evidence="1">Interacts with the Sec translocase complex via SecD. Specifically interacts with transmembrane segments of nascent integral membrane proteins during membrane integration.</text>
</comment>
<comment type="subcellular location">
    <subcellularLocation>
        <location evidence="1">Cell inner membrane</location>
        <topology evidence="1">Multi-pass membrane protein</topology>
    </subcellularLocation>
</comment>
<comment type="similarity">
    <text evidence="1">Belongs to the OXA1/ALB3/YidC family. Type 1 subfamily.</text>
</comment>
<evidence type="ECO:0000255" key="1">
    <source>
        <dbReference type="HAMAP-Rule" id="MF_01810"/>
    </source>
</evidence>
<evidence type="ECO:0000256" key="2">
    <source>
        <dbReference type="SAM" id="MobiDB-lite"/>
    </source>
</evidence>
<dbReference type="EMBL" id="AM233362">
    <property type="protein sequence ID" value="CAJ78619.1"/>
    <property type="molecule type" value="Genomic_DNA"/>
</dbReference>
<dbReference type="RefSeq" id="WP_003014183.1">
    <property type="nucleotide sequence ID" value="NZ_CP009694.1"/>
</dbReference>
<dbReference type="SMR" id="Q2A5M8"/>
<dbReference type="KEGG" id="ftl:FTL_0178"/>
<dbReference type="Proteomes" id="UP000001944">
    <property type="component" value="Chromosome"/>
</dbReference>
<dbReference type="GO" id="GO:0005886">
    <property type="term" value="C:plasma membrane"/>
    <property type="evidence" value="ECO:0007669"/>
    <property type="project" value="UniProtKB-SubCell"/>
</dbReference>
<dbReference type="GO" id="GO:0032977">
    <property type="term" value="F:membrane insertase activity"/>
    <property type="evidence" value="ECO:0007669"/>
    <property type="project" value="InterPro"/>
</dbReference>
<dbReference type="GO" id="GO:0051205">
    <property type="term" value="P:protein insertion into membrane"/>
    <property type="evidence" value="ECO:0007669"/>
    <property type="project" value="TreeGrafter"/>
</dbReference>
<dbReference type="GO" id="GO:0015031">
    <property type="term" value="P:protein transport"/>
    <property type="evidence" value="ECO:0007669"/>
    <property type="project" value="UniProtKB-KW"/>
</dbReference>
<dbReference type="CDD" id="cd20070">
    <property type="entry name" value="5TM_YidC_Alb3"/>
    <property type="match status" value="1"/>
</dbReference>
<dbReference type="CDD" id="cd19961">
    <property type="entry name" value="EcYidC-like_peri"/>
    <property type="match status" value="1"/>
</dbReference>
<dbReference type="Gene3D" id="2.70.98.90">
    <property type="match status" value="1"/>
</dbReference>
<dbReference type="HAMAP" id="MF_01810">
    <property type="entry name" value="YidC_type1"/>
    <property type="match status" value="1"/>
</dbReference>
<dbReference type="InterPro" id="IPR019998">
    <property type="entry name" value="Membr_insert_YidC"/>
</dbReference>
<dbReference type="InterPro" id="IPR028053">
    <property type="entry name" value="Membr_insert_YidC_N"/>
</dbReference>
<dbReference type="InterPro" id="IPR001708">
    <property type="entry name" value="YidC/ALB3/OXA1/COX18"/>
</dbReference>
<dbReference type="InterPro" id="IPR028055">
    <property type="entry name" value="YidC/Oxa/ALB_C"/>
</dbReference>
<dbReference type="InterPro" id="IPR047196">
    <property type="entry name" value="YidC_ALB_C"/>
</dbReference>
<dbReference type="InterPro" id="IPR038221">
    <property type="entry name" value="YidC_periplasmic_sf"/>
</dbReference>
<dbReference type="NCBIfam" id="NF002352">
    <property type="entry name" value="PRK01318.1-3"/>
    <property type="match status" value="1"/>
</dbReference>
<dbReference type="NCBIfam" id="TIGR03593">
    <property type="entry name" value="yidC_nterm"/>
    <property type="match status" value="1"/>
</dbReference>
<dbReference type="NCBIfam" id="TIGR03592">
    <property type="entry name" value="yidC_oxa1_cterm"/>
    <property type="match status" value="1"/>
</dbReference>
<dbReference type="PANTHER" id="PTHR12428:SF65">
    <property type="entry name" value="CYTOCHROME C OXIDASE ASSEMBLY PROTEIN COX18, MITOCHONDRIAL"/>
    <property type="match status" value="1"/>
</dbReference>
<dbReference type="PANTHER" id="PTHR12428">
    <property type="entry name" value="OXA1"/>
    <property type="match status" value="1"/>
</dbReference>
<dbReference type="Pfam" id="PF02096">
    <property type="entry name" value="60KD_IMP"/>
    <property type="match status" value="1"/>
</dbReference>
<dbReference type="Pfam" id="PF14849">
    <property type="entry name" value="YidC_periplas"/>
    <property type="match status" value="1"/>
</dbReference>
<dbReference type="PRINTS" id="PR00701">
    <property type="entry name" value="60KDINNERMP"/>
</dbReference>
<dbReference type="PRINTS" id="PR01900">
    <property type="entry name" value="YIDCPROTEIN"/>
</dbReference>
<name>YIDC_FRATH</name>
<gene>
    <name evidence="1" type="primary">yidC</name>
    <name type="ordered locus">FTL_0178</name>
</gene>
<accession>Q2A5M8</accession>
<feature type="chain" id="PRO_1000070095" description="Membrane protein insertase YidC">
    <location>
        <begin position="1"/>
        <end position="551"/>
    </location>
</feature>
<feature type="transmembrane region" description="Helical" evidence="1">
    <location>
        <begin position="3"/>
        <end position="23"/>
    </location>
</feature>
<feature type="transmembrane region" description="Helical" evidence="1">
    <location>
        <begin position="361"/>
        <end position="381"/>
    </location>
</feature>
<feature type="transmembrane region" description="Helical" evidence="1">
    <location>
        <begin position="431"/>
        <end position="451"/>
    </location>
</feature>
<feature type="transmembrane region" description="Helical" evidence="1">
    <location>
        <begin position="504"/>
        <end position="524"/>
    </location>
</feature>
<feature type="region of interest" description="Disordered" evidence="2">
    <location>
        <begin position="33"/>
        <end position="55"/>
    </location>
</feature>
<protein>
    <recommendedName>
        <fullName evidence="1">Membrane protein insertase YidC</fullName>
    </recommendedName>
    <alternativeName>
        <fullName evidence="1">Foldase YidC</fullName>
    </alternativeName>
    <alternativeName>
        <fullName evidence="1">Membrane integrase YidC</fullName>
    </alternativeName>
    <alternativeName>
        <fullName evidence="1">Membrane protein YidC</fullName>
    </alternativeName>
</protein>
<keyword id="KW-0997">Cell inner membrane</keyword>
<keyword id="KW-1003">Cell membrane</keyword>
<keyword id="KW-0143">Chaperone</keyword>
<keyword id="KW-0472">Membrane</keyword>
<keyword id="KW-0653">Protein transport</keyword>
<keyword id="KW-1185">Reference proteome</keyword>
<keyword id="KW-0812">Transmembrane</keyword>
<keyword id="KW-1133">Transmembrane helix</keyword>
<keyword id="KW-0813">Transport</keyword>
<sequence>MKANHIRILLLVTIAIMFISLMGKWEQTFPADNTKQQTSATQNNSHYDNADSSTNTDVTITDAKSSLAKETNFSKYDNAKSITINTVVFKDVKVSLLDGAIISASLKDYSISLDDKTPMSLLTDKSGSEYIAKSTIVVNKQPISVNFEDQGIKIENSKQILTLTGSADGLQITRTYTFDDTKYNISVSQNIKNTTSAPVNVIVDDSFARDFDPAGDSFSLLNAHSYTFTGVAYSTAKDSFRKESFKDISKTNGQPTVINSDGQGWVAFLQHYFVSAWIPQSTNAKIYYKNLNGDVFEAGAFTGATIAPNQSENISSILYTGPIIKANLVDLAPNLEKTLDYGMLSFFSEIIFWVMNHIHSLVGNWGLAIILVTCLIKLIFYPLSAKSYRSMAKMRMLQPRIKRLQETYKDDRQALGKKMMELYKEEKVNPLSGCLPMLIQIPIFISLYWVLLESVELRQAPFIFWIHDLSMKDPYFVLPVLMGLSMFLQQKLSPAPADPMQAKVMMFLPVIFTFLFASFPSGLVLYWLTNNLISISQQWIITRHYQATHKK</sequence>
<reference key="1">
    <citation type="submission" date="2006-03" db="EMBL/GenBank/DDBJ databases">
        <title>Complete genome sequence of Francisella tularensis LVS (Live Vaccine Strain).</title>
        <authorList>
            <person name="Chain P."/>
            <person name="Larimer F."/>
            <person name="Land M."/>
            <person name="Stilwagen S."/>
            <person name="Larsson P."/>
            <person name="Bearden S."/>
            <person name="Chu M."/>
            <person name="Oyston P."/>
            <person name="Forsman M."/>
            <person name="Andersson S."/>
            <person name="Lindler L."/>
            <person name="Titball R."/>
            <person name="Garcia E."/>
        </authorList>
    </citation>
    <scope>NUCLEOTIDE SEQUENCE [LARGE SCALE GENOMIC DNA]</scope>
    <source>
        <strain>LVS</strain>
    </source>
</reference>
<proteinExistence type="inferred from homology"/>
<organism>
    <name type="scientific">Francisella tularensis subsp. holarctica (strain LVS)</name>
    <dbReference type="NCBI Taxonomy" id="376619"/>
    <lineage>
        <taxon>Bacteria</taxon>
        <taxon>Pseudomonadati</taxon>
        <taxon>Pseudomonadota</taxon>
        <taxon>Gammaproteobacteria</taxon>
        <taxon>Thiotrichales</taxon>
        <taxon>Francisellaceae</taxon>
        <taxon>Francisella</taxon>
    </lineage>
</organism>